<dbReference type="EMBL" id="CP001164">
    <property type="protein sequence ID" value="ACI36754.1"/>
    <property type="molecule type" value="Genomic_DNA"/>
</dbReference>
<dbReference type="SMR" id="B5Z428"/>
<dbReference type="KEGG" id="ecf:ECH74115_2303"/>
<dbReference type="HOGENOM" id="CLU_015263_5_2_6"/>
<dbReference type="GO" id="GO:0034707">
    <property type="term" value="C:chloride channel complex"/>
    <property type="evidence" value="ECO:0007669"/>
    <property type="project" value="UniProtKB-KW"/>
</dbReference>
<dbReference type="GO" id="GO:0005886">
    <property type="term" value="C:plasma membrane"/>
    <property type="evidence" value="ECO:0007669"/>
    <property type="project" value="UniProtKB-SubCell"/>
</dbReference>
<dbReference type="GO" id="GO:0005247">
    <property type="term" value="F:voltage-gated chloride channel activity"/>
    <property type="evidence" value="ECO:0007669"/>
    <property type="project" value="UniProtKB-UniRule"/>
</dbReference>
<dbReference type="GO" id="GO:0010447">
    <property type="term" value="P:response to acidic pH"/>
    <property type="evidence" value="ECO:0007669"/>
    <property type="project" value="InterPro"/>
</dbReference>
<dbReference type="CDD" id="cd00400">
    <property type="entry name" value="Voltage_gated_ClC"/>
    <property type="match status" value="1"/>
</dbReference>
<dbReference type="FunFam" id="1.10.3080.10:FF:000010">
    <property type="entry name" value="Voltage-gated ClC-type chloride channel ClcB"/>
    <property type="match status" value="1"/>
</dbReference>
<dbReference type="Gene3D" id="1.10.3080.10">
    <property type="entry name" value="Clc chloride channel"/>
    <property type="match status" value="1"/>
</dbReference>
<dbReference type="HAMAP" id="MF_01203">
    <property type="entry name" value="CLC_ClcB"/>
    <property type="match status" value="1"/>
</dbReference>
<dbReference type="InterPro" id="IPR014743">
    <property type="entry name" value="Cl-channel_core"/>
</dbReference>
<dbReference type="InterPro" id="IPR023790">
    <property type="entry name" value="Cl-channel_volt-gated_ClcB"/>
</dbReference>
<dbReference type="InterPro" id="IPR001807">
    <property type="entry name" value="ClC"/>
</dbReference>
<dbReference type="InterPro" id="IPR050368">
    <property type="entry name" value="ClC-type_chloride_channel"/>
</dbReference>
<dbReference type="NCBIfam" id="NF002437">
    <property type="entry name" value="PRK01610.1"/>
    <property type="match status" value="1"/>
</dbReference>
<dbReference type="PANTHER" id="PTHR43427">
    <property type="entry name" value="CHLORIDE CHANNEL PROTEIN CLC-E"/>
    <property type="match status" value="1"/>
</dbReference>
<dbReference type="PANTHER" id="PTHR43427:SF6">
    <property type="entry name" value="CHLORIDE CHANNEL PROTEIN CLC-E"/>
    <property type="match status" value="1"/>
</dbReference>
<dbReference type="Pfam" id="PF00654">
    <property type="entry name" value="Voltage_CLC"/>
    <property type="match status" value="1"/>
</dbReference>
<dbReference type="PRINTS" id="PR00762">
    <property type="entry name" value="CLCHANNEL"/>
</dbReference>
<dbReference type="SUPFAM" id="SSF81340">
    <property type="entry name" value="Clc chloride channel"/>
    <property type="match status" value="1"/>
</dbReference>
<keyword id="KW-0997">Cell inner membrane</keyword>
<keyword id="KW-1003">Cell membrane</keyword>
<keyword id="KW-0868">Chloride</keyword>
<keyword id="KW-0869">Chloride channel</keyword>
<keyword id="KW-0407">Ion channel</keyword>
<keyword id="KW-0406">Ion transport</keyword>
<keyword id="KW-0472">Membrane</keyword>
<keyword id="KW-0812">Transmembrane</keyword>
<keyword id="KW-1133">Transmembrane helix</keyword>
<keyword id="KW-0813">Transport</keyword>
<keyword id="KW-0851">Voltage-gated channel</keyword>
<sequence>MFRRLLIATVVGILAAFAVAGFRHAMLLLEWLFLNNDSGSLVNAATNLSPWRRLLTPALGGLAAGLLLMGWQKFTQQRPHAPTDYMEALQTDGQFDYAASLVKSLASLLVVTSGSAIGREGAMILLAALAASCFAQRFTPRQEWKLWIACGAAAGMAAAYRAPLAGSLFIAEVLFGTMMLASLGPVIISAVVALLVSNLINHSDALLYSVQLSVTVQARDYALIISTGVLAGLCGPLLLTLMNACHRGFVSLKLAPPWQLALGGLIVGLLSLFTPAVWGNGYSTVQSFLTAPPLLMIIAGIFLCKLCAVLASSGSGAPGGVFTPTLFIGLAIGMLYGRSLGLWFPDGEEITLLLGLTGMATLLAATTHAPIMSTLMICEMTGEYQLLPGLLIACVIASVISRTLHRDSIYRQHTAQHS</sequence>
<evidence type="ECO:0000255" key="1">
    <source>
        <dbReference type="HAMAP-Rule" id="MF_01203"/>
    </source>
</evidence>
<name>CLCB_ECO5E</name>
<gene>
    <name evidence="1" type="primary">clcB</name>
    <name type="ordered locus">ECH74115_2303</name>
</gene>
<feature type="chain" id="PRO_1000138680" description="Voltage-gated ClC-type chloride channel ClcB">
    <location>
        <begin position="1"/>
        <end position="418"/>
    </location>
</feature>
<feature type="transmembrane region" description="Helical" evidence="1">
    <location>
        <begin position="5"/>
        <end position="25"/>
    </location>
</feature>
<feature type="transmembrane region" description="Helical" evidence="1">
    <location>
        <begin position="54"/>
        <end position="74"/>
    </location>
</feature>
<feature type="transmembrane region" description="Helical" evidence="1">
    <location>
        <begin position="146"/>
        <end position="166"/>
    </location>
</feature>
<feature type="transmembrane region" description="Helical" evidence="1">
    <location>
        <begin position="168"/>
        <end position="188"/>
    </location>
</feature>
<feature type="transmembrane region" description="Helical" evidence="1">
    <location>
        <begin position="222"/>
        <end position="242"/>
    </location>
</feature>
<feature type="transmembrane region" description="Helical" evidence="1">
    <location>
        <begin position="258"/>
        <end position="278"/>
    </location>
</feature>
<feature type="transmembrane region" description="Helical" evidence="1">
    <location>
        <begin position="291"/>
        <end position="311"/>
    </location>
</feature>
<feature type="transmembrane region" description="Helical" evidence="1">
    <location>
        <begin position="316"/>
        <end position="336"/>
    </location>
</feature>
<feature type="transmembrane region" description="Helical" evidence="1">
    <location>
        <begin position="352"/>
        <end position="372"/>
    </location>
</feature>
<feature type="transmembrane region" description="Helical" evidence="1">
    <location>
        <begin position="380"/>
        <end position="400"/>
    </location>
</feature>
<accession>B5Z428</accession>
<protein>
    <recommendedName>
        <fullName evidence="1">Voltage-gated ClC-type chloride channel ClcB</fullName>
    </recommendedName>
</protein>
<organism>
    <name type="scientific">Escherichia coli O157:H7 (strain EC4115 / EHEC)</name>
    <dbReference type="NCBI Taxonomy" id="444450"/>
    <lineage>
        <taxon>Bacteria</taxon>
        <taxon>Pseudomonadati</taxon>
        <taxon>Pseudomonadota</taxon>
        <taxon>Gammaproteobacteria</taxon>
        <taxon>Enterobacterales</taxon>
        <taxon>Enterobacteriaceae</taxon>
        <taxon>Escherichia</taxon>
    </lineage>
</organism>
<proteinExistence type="inferred from homology"/>
<reference key="1">
    <citation type="journal article" date="2011" name="Proc. Natl. Acad. Sci. U.S.A.">
        <title>Genomic anatomy of Escherichia coli O157:H7 outbreaks.</title>
        <authorList>
            <person name="Eppinger M."/>
            <person name="Mammel M.K."/>
            <person name="Leclerc J.E."/>
            <person name="Ravel J."/>
            <person name="Cebula T.A."/>
        </authorList>
    </citation>
    <scope>NUCLEOTIDE SEQUENCE [LARGE SCALE GENOMIC DNA]</scope>
    <source>
        <strain>EC4115 / EHEC</strain>
    </source>
</reference>
<comment type="function">
    <text evidence="1">Probably acts as an electrical shunt for an outwardly-directed proton pump that is linked to amino acid decarboxylation, as part of the extreme acid resistance (XAR) response.</text>
</comment>
<comment type="subcellular location">
    <subcellularLocation>
        <location evidence="1">Cell inner membrane</location>
        <topology evidence="1">Multi-pass membrane protein</topology>
    </subcellularLocation>
</comment>
<comment type="similarity">
    <text evidence="1">Belongs to the chloride channel (TC 2.A.49) family. ClcB subfamily.</text>
</comment>